<gene>
    <name type="primary">SON1</name>
    <name type="ordered locus">At2g17310</name>
    <name type="ORF">F5J6.7</name>
</gene>
<protein>
    <recommendedName>
        <fullName>Protein SUPPRESSOR OF NIM1 1</fullName>
    </recommendedName>
</protein>
<organism>
    <name type="scientific">Arabidopsis thaliana</name>
    <name type="common">Mouse-ear cress</name>
    <dbReference type="NCBI Taxonomy" id="3702"/>
    <lineage>
        <taxon>Eukaryota</taxon>
        <taxon>Viridiplantae</taxon>
        <taxon>Streptophyta</taxon>
        <taxon>Embryophyta</taxon>
        <taxon>Tracheophyta</taxon>
        <taxon>Spermatophyta</taxon>
        <taxon>Magnoliopsida</taxon>
        <taxon>eudicotyledons</taxon>
        <taxon>Gunneridae</taxon>
        <taxon>Pentapetalae</taxon>
        <taxon>rosids</taxon>
        <taxon>malvids</taxon>
        <taxon>Brassicales</taxon>
        <taxon>Brassicaceae</taxon>
        <taxon>Camelineae</taxon>
        <taxon>Arabidopsis</taxon>
    </lineage>
</organism>
<sequence length="370" mass="43322">MALPWELEEDILSRLPPISLVRFRTVSKHWNSLFNDKTFINNHLSRSRPEFIILTNSKIYSVDIIDHNNIDPTIRLHEIPTYDIHSRGTDLNRTIINTCDEFLFYNYRYWDNMTALWNPWLRQVRWIEYANQEFCVFGLGYDNSRPEKVYKILGHLFCHGKVLRDQKVVIYECASDSLRFIDRPEDDDWPITETAKRSNVSLNGNLYWFGCSNYENDEYYIRIFDFSTEDFKPFCLLPCQMSHSTDELVLAVYKGDRFSLLKQCSVTREIGVWVTKERISNDNGNGGEGVEWLKLMTLSKPNLPKLFGTVSYFIYGKTLYMCNGDDETALACIYIVREDVCKKFQIGSGNINCRHCVYTPNLLSLPLFIG</sequence>
<evidence type="ECO:0000255" key="1">
    <source>
        <dbReference type="PROSITE-ProRule" id="PRU00080"/>
    </source>
</evidence>
<evidence type="ECO:0000269" key="2">
    <source>
    </source>
</evidence>
<evidence type="ECO:0000305" key="3"/>
<reference key="1">
    <citation type="journal article" date="2002" name="Plant Cell">
        <title>Arabidopsis SON1 is an F-box protein that regulates a novel induced defense response independent of both salicylic acid and systemic acquired resistance.</title>
        <authorList>
            <person name="Kim H.S."/>
            <person name="Delaney T.P."/>
        </authorList>
    </citation>
    <scope>NUCLEOTIDE SEQUENCE [GENOMIC DNA]</scope>
    <scope>FUNCTION</scope>
    <scope>TISSUE SPECIFICITY</scope>
    <scope>MUTAGENESIS OF ARG-257</scope>
</reference>
<reference key="2">
    <citation type="journal article" date="1999" name="Nature">
        <title>Sequence and analysis of chromosome 2 of the plant Arabidopsis thaliana.</title>
        <authorList>
            <person name="Lin X."/>
            <person name="Kaul S."/>
            <person name="Rounsley S.D."/>
            <person name="Shea T.P."/>
            <person name="Benito M.-I."/>
            <person name="Town C.D."/>
            <person name="Fujii C.Y."/>
            <person name="Mason T.M."/>
            <person name="Bowman C.L."/>
            <person name="Barnstead M.E."/>
            <person name="Feldblyum T.V."/>
            <person name="Buell C.R."/>
            <person name="Ketchum K.A."/>
            <person name="Lee J.J."/>
            <person name="Ronning C.M."/>
            <person name="Koo H.L."/>
            <person name="Moffat K.S."/>
            <person name="Cronin L.A."/>
            <person name="Shen M."/>
            <person name="Pai G."/>
            <person name="Van Aken S."/>
            <person name="Umayam L."/>
            <person name="Tallon L.J."/>
            <person name="Gill J.E."/>
            <person name="Adams M.D."/>
            <person name="Carrera A.J."/>
            <person name="Creasy T.H."/>
            <person name="Goodman H.M."/>
            <person name="Somerville C.R."/>
            <person name="Copenhaver G.P."/>
            <person name="Preuss D."/>
            <person name="Nierman W.C."/>
            <person name="White O."/>
            <person name="Eisen J.A."/>
            <person name="Salzberg S.L."/>
            <person name="Fraser C.M."/>
            <person name="Venter J.C."/>
        </authorList>
    </citation>
    <scope>NUCLEOTIDE SEQUENCE [LARGE SCALE GENOMIC DNA]</scope>
    <source>
        <strain>cv. Columbia</strain>
    </source>
</reference>
<reference key="3">
    <citation type="journal article" date="2017" name="Plant J.">
        <title>Araport11: a complete reannotation of the Arabidopsis thaliana reference genome.</title>
        <authorList>
            <person name="Cheng C.Y."/>
            <person name="Krishnakumar V."/>
            <person name="Chan A.P."/>
            <person name="Thibaud-Nissen F."/>
            <person name="Schobel S."/>
            <person name="Town C.D."/>
        </authorList>
    </citation>
    <scope>GENOME REANNOTATION</scope>
    <source>
        <strain>cv. Columbia</strain>
    </source>
</reference>
<reference key="4">
    <citation type="journal article" date="2004" name="Genome Res.">
        <title>Whole genome sequence comparisons and 'full-length' cDNA sequences: a combined approach to evaluate and improve Arabidopsis genome annotation.</title>
        <authorList>
            <person name="Castelli V."/>
            <person name="Aury J.-M."/>
            <person name="Jaillon O."/>
            <person name="Wincker P."/>
            <person name="Clepet C."/>
            <person name="Menard M."/>
            <person name="Cruaud C."/>
            <person name="Quetier F."/>
            <person name="Scarpelli C."/>
            <person name="Schaechter V."/>
            <person name="Temple G."/>
            <person name="Caboche M."/>
            <person name="Weissenbach J."/>
            <person name="Salanoubat M."/>
        </authorList>
    </citation>
    <scope>NUCLEOTIDE SEQUENCE [LARGE SCALE MRNA]</scope>
    <source>
        <strain>cv. Columbia</strain>
    </source>
</reference>
<accession>Q8LL17</accession>
<feature type="chain" id="PRO_0000285581" description="Protein SUPPRESSOR OF NIM1 1">
    <location>
        <begin position="1"/>
        <end position="370"/>
    </location>
</feature>
<feature type="domain" description="F-box" evidence="1">
    <location>
        <begin position="1"/>
        <end position="43"/>
    </location>
</feature>
<feature type="mutagenesis site" description="In son1-1; confers resistance to pathogens such as P.syringae and P.parasitica." evidence="2">
    <original>R</original>
    <variation>Q</variation>
    <location>
        <position position="257"/>
    </location>
</feature>
<feature type="sequence conflict" description="In Ref. 4; BX821299." evidence="3" ref="4">
    <original>E</original>
    <variation>D</variation>
    <location>
        <position position="327"/>
    </location>
</feature>
<dbReference type="EMBL" id="AF472589">
    <property type="protein sequence ID" value="AAM89220.1"/>
    <property type="molecule type" value="Genomic_DNA"/>
</dbReference>
<dbReference type="EMBL" id="CP002685">
    <property type="protein sequence ID" value="AEC06612.1"/>
    <property type="molecule type" value="Genomic_DNA"/>
</dbReference>
<dbReference type="EMBL" id="BX821299">
    <property type="status" value="NOT_ANNOTATED_CDS"/>
    <property type="molecule type" value="mRNA"/>
</dbReference>
<dbReference type="PIR" id="F84550">
    <property type="entry name" value="F84550"/>
</dbReference>
<dbReference type="RefSeq" id="NP_179323.1">
    <property type="nucleotide sequence ID" value="NM_127286.2"/>
</dbReference>
<dbReference type="STRING" id="3702.Q8LL17"/>
<dbReference type="PaxDb" id="3702-AT2G17310.1"/>
<dbReference type="EnsemblPlants" id="AT2G17310.1">
    <property type="protein sequence ID" value="AT2G17310.1"/>
    <property type="gene ID" value="AT2G17310"/>
</dbReference>
<dbReference type="GeneID" id="816238"/>
<dbReference type="Gramene" id="AT2G17310.1">
    <property type="protein sequence ID" value="AT2G17310.1"/>
    <property type="gene ID" value="AT2G17310"/>
</dbReference>
<dbReference type="KEGG" id="ath:AT2G17310"/>
<dbReference type="Araport" id="AT2G17310"/>
<dbReference type="TAIR" id="AT2G17310">
    <property type="gene designation" value="SON1"/>
</dbReference>
<dbReference type="HOGENOM" id="CLU_034692_2_1_1"/>
<dbReference type="InParanoid" id="Q8LL17"/>
<dbReference type="OMA" id="TRNIGIW"/>
<dbReference type="PhylomeDB" id="Q8LL17"/>
<dbReference type="PRO" id="PR:Q8LL17"/>
<dbReference type="Proteomes" id="UP000006548">
    <property type="component" value="Chromosome 2"/>
</dbReference>
<dbReference type="ExpressionAtlas" id="Q8LL17">
    <property type="expression patterns" value="baseline and differential"/>
</dbReference>
<dbReference type="GO" id="GO:0019005">
    <property type="term" value="C:SCF ubiquitin ligase complex"/>
    <property type="evidence" value="ECO:0000250"/>
    <property type="project" value="TAIR"/>
</dbReference>
<dbReference type="GO" id="GO:0006952">
    <property type="term" value="P:defense response"/>
    <property type="evidence" value="ECO:0007669"/>
    <property type="project" value="UniProtKB-KW"/>
</dbReference>
<dbReference type="GO" id="GO:0016567">
    <property type="term" value="P:protein ubiquitination"/>
    <property type="evidence" value="ECO:0000250"/>
    <property type="project" value="TAIR"/>
</dbReference>
<dbReference type="GO" id="GO:0009617">
    <property type="term" value="P:response to bacterium"/>
    <property type="evidence" value="ECO:0000315"/>
    <property type="project" value="TAIR"/>
</dbReference>
<dbReference type="GO" id="GO:0009620">
    <property type="term" value="P:response to fungus"/>
    <property type="evidence" value="ECO:0000315"/>
    <property type="project" value="TAIR"/>
</dbReference>
<dbReference type="CDD" id="cd22157">
    <property type="entry name" value="F-box_AtFBW1-like"/>
    <property type="match status" value="1"/>
</dbReference>
<dbReference type="Gene3D" id="1.20.1280.50">
    <property type="match status" value="1"/>
</dbReference>
<dbReference type="InterPro" id="IPR006527">
    <property type="entry name" value="F-box-assoc_dom_typ1"/>
</dbReference>
<dbReference type="InterPro" id="IPR017451">
    <property type="entry name" value="F-box-assoc_interact_dom"/>
</dbReference>
<dbReference type="InterPro" id="IPR036047">
    <property type="entry name" value="F-box-like_dom_sf"/>
</dbReference>
<dbReference type="InterPro" id="IPR001810">
    <property type="entry name" value="F-box_dom"/>
</dbReference>
<dbReference type="InterPro" id="IPR011043">
    <property type="entry name" value="Gal_Oxase/kelch_b-propeller"/>
</dbReference>
<dbReference type="InterPro" id="IPR050796">
    <property type="entry name" value="SCF_F-box_component"/>
</dbReference>
<dbReference type="NCBIfam" id="TIGR01640">
    <property type="entry name" value="F_box_assoc_1"/>
    <property type="match status" value="1"/>
</dbReference>
<dbReference type="PANTHER" id="PTHR31672">
    <property type="entry name" value="BNACNNG10540D PROTEIN"/>
    <property type="match status" value="1"/>
</dbReference>
<dbReference type="PANTHER" id="PTHR31672:SF13">
    <property type="entry name" value="F-BOX PROTEIN CPR30-LIKE"/>
    <property type="match status" value="1"/>
</dbReference>
<dbReference type="Pfam" id="PF00646">
    <property type="entry name" value="F-box"/>
    <property type="match status" value="1"/>
</dbReference>
<dbReference type="Pfam" id="PF07734">
    <property type="entry name" value="FBA_1"/>
    <property type="match status" value="1"/>
</dbReference>
<dbReference type="SMART" id="SM00256">
    <property type="entry name" value="FBOX"/>
    <property type="match status" value="1"/>
</dbReference>
<dbReference type="SUPFAM" id="SSF81383">
    <property type="entry name" value="F-box domain"/>
    <property type="match status" value="1"/>
</dbReference>
<dbReference type="SUPFAM" id="SSF50965">
    <property type="entry name" value="Galactose oxidase, central domain"/>
    <property type="match status" value="1"/>
</dbReference>
<dbReference type="PROSITE" id="PS50181">
    <property type="entry name" value="FBOX"/>
    <property type="match status" value="1"/>
</dbReference>
<proteinExistence type="evidence at protein level"/>
<comment type="function">
    <text evidence="2">Negatively regulates a plant defense signaling pathway which is independent of salicylic acid (SA) and systemic acquired resistance (SAR). Confers sensitivity to P.syringae and P.parasitica.</text>
</comment>
<comment type="tissue specificity">
    <text evidence="2">Ubiquitous, at low levels.</text>
</comment>
<name>SON1_ARATH</name>
<keyword id="KW-0611">Plant defense</keyword>
<keyword id="KW-1185">Reference proteome</keyword>